<evidence type="ECO:0000250" key="1"/>
<evidence type="ECO:0000255" key="2">
    <source>
        <dbReference type="HAMAP-Rule" id="MF_01303"/>
    </source>
</evidence>
<sequence length="81" mass="8802">MAHSVKIYDTCIGCTQCVRACPTDVLEMIPWDGCKASQIASAPRTEDCVGCKRCESACPTDFLSVRVYLGSETTRSMGLAY</sequence>
<geneLocation type="chloroplast"/>
<accession>Q32S09</accession>
<feature type="initiator methionine" description="Removed" evidence="1">
    <location>
        <position position="1"/>
    </location>
</feature>
<feature type="chain" id="PRO_0000276003" description="Photosystem I iron-sulfur center">
    <location>
        <begin position="2"/>
        <end position="81"/>
    </location>
</feature>
<feature type="domain" description="4Fe-4S ferredoxin-type 1" evidence="2">
    <location>
        <begin position="2"/>
        <end position="31"/>
    </location>
</feature>
<feature type="domain" description="4Fe-4S ferredoxin-type 2" evidence="2">
    <location>
        <begin position="39"/>
        <end position="68"/>
    </location>
</feature>
<feature type="binding site" evidence="2">
    <location>
        <position position="11"/>
    </location>
    <ligand>
        <name>[4Fe-4S] cluster</name>
        <dbReference type="ChEBI" id="CHEBI:49883"/>
        <label>1</label>
    </ligand>
</feature>
<feature type="binding site" evidence="2">
    <location>
        <position position="14"/>
    </location>
    <ligand>
        <name>[4Fe-4S] cluster</name>
        <dbReference type="ChEBI" id="CHEBI:49883"/>
        <label>1</label>
    </ligand>
</feature>
<feature type="binding site" evidence="2">
    <location>
        <position position="17"/>
    </location>
    <ligand>
        <name>[4Fe-4S] cluster</name>
        <dbReference type="ChEBI" id="CHEBI:49883"/>
        <label>1</label>
    </ligand>
</feature>
<feature type="binding site" evidence="2">
    <location>
        <position position="21"/>
    </location>
    <ligand>
        <name>[4Fe-4S] cluster</name>
        <dbReference type="ChEBI" id="CHEBI:49883"/>
        <label>2</label>
    </ligand>
</feature>
<feature type="binding site" evidence="2">
    <location>
        <position position="48"/>
    </location>
    <ligand>
        <name>[4Fe-4S] cluster</name>
        <dbReference type="ChEBI" id="CHEBI:49883"/>
        <label>2</label>
    </ligand>
</feature>
<feature type="binding site" evidence="2">
    <location>
        <position position="51"/>
    </location>
    <ligand>
        <name>[4Fe-4S] cluster</name>
        <dbReference type="ChEBI" id="CHEBI:49883"/>
        <label>2</label>
    </ligand>
</feature>
<feature type="binding site" evidence="2">
    <location>
        <position position="54"/>
    </location>
    <ligand>
        <name>[4Fe-4S] cluster</name>
        <dbReference type="ChEBI" id="CHEBI:49883"/>
        <label>2</label>
    </ligand>
</feature>
<feature type="binding site" evidence="2">
    <location>
        <position position="58"/>
    </location>
    <ligand>
        <name>[4Fe-4S] cluster</name>
        <dbReference type="ChEBI" id="CHEBI:49883"/>
        <label>1</label>
    </ligand>
</feature>
<keyword id="KW-0004">4Fe-4S</keyword>
<keyword id="KW-0150">Chloroplast</keyword>
<keyword id="KW-0249">Electron transport</keyword>
<keyword id="KW-0408">Iron</keyword>
<keyword id="KW-0411">Iron-sulfur</keyword>
<keyword id="KW-0472">Membrane</keyword>
<keyword id="KW-0479">Metal-binding</keyword>
<keyword id="KW-0560">Oxidoreductase</keyword>
<keyword id="KW-0602">Photosynthesis</keyword>
<keyword id="KW-0603">Photosystem I</keyword>
<keyword id="KW-0934">Plastid</keyword>
<keyword id="KW-0677">Repeat</keyword>
<keyword id="KW-0793">Thylakoid</keyword>
<keyword id="KW-0813">Transport</keyword>
<organism>
    <name type="scientific">Staurastrum punctulatum</name>
    <name type="common">Green alga</name>
    <name type="synonym">Cosmoastrum punctulatum</name>
    <dbReference type="NCBI Taxonomy" id="102822"/>
    <lineage>
        <taxon>Eukaryota</taxon>
        <taxon>Viridiplantae</taxon>
        <taxon>Streptophyta</taxon>
        <taxon>Zygnematophyceae</taxon>
        <taxon>Zygnematophycidae</taxon>
        <taxon>Desmidiales</taxon>
        <taxon>Desmidiaceae</taxon>
        <taxon>Staurastrum</taxon>
    </lineage>
</organism>
<proteinExistence type="inferred from homology"/>
<reference key="1">
    <citation type="journal article" date="2005" name="BMC Biol.">
        <title>The complete chloroplast DNA sequences of the charophycean green algae Staurastrum and Zygnema reveal that the chloroplast genome underwent extensive changes during the evolution of the Zygnematales.</title>
        <authorList>
            <person name="Turmel M."/>
            <person name="Otis C."/>
            <person name="Lemieux C."/>
        </authorList>
    </citation>
    <scope>NUCLEOTIDE SEQUENCE [LARGE SCALE GENOMIC DNA]</scope>
</reference>
<protein>
    <recommendedName>
        <fullName evidence="2">Photosystem I iron-sulfur center</fullName>
        <ecNumber evidence="2">1.97.1.12</ecNumber>
    </recommendedName>
    <alternativeName>
        <fullName evidence="2">9 kDa polypeptide</fullName>
    </alternativeName>
    <alternativeName>
        <fullName evidence="2">PSI-C</fullName>
    </alternativeName>
    <alternativeName>
        <fullName evidence="2">Photosystem I subunit VII</fullName>
    </alternativeName>
    <alternativeName>
        <fullName evidence="2">PsaC</fullName>
    </alternativeName>
</protein>
<gene>
    <name evidence="2" type="primary">psaC</name>
</gene>
<name>PSAC_STAPU</name>
<dbReference type="EC" id="1.97.1.12" evidence="2"/>
<dbReference type="EMBL" id="AY958085">
    <property type="protein sequence ID" value="AAX45717.1"/>
    <property type="molecule type" value="Genomic_DNA"/>
</dbReference>
<dbReference type="RefSeq" id="YP_636367.1">
    <property type="nucleotide sequence ID" value="NC_008116.1"/>
</dbReference>
<dbReference type="SMR" id="Q32S09"/>
<dbReference type="GeneID" id="4108666"/>
<dbReference type="GO" id="GO:0009535">
    <property type="term" value="C:chloroplast thylakoid membrane"/>
    <property type="evidence" value="ECO:0007669"/>
    <property type="project" value="UniProtKB-SubCell"/>
</dbReference>
<dbReference type="GO" id="GO:0009522">
    <property type="term" value="C:photosystem I"/>
    <property type="evidence" value="ECO:0007669"/>
    <property type="project" value="UniProtKB-KW"/>
</dbReference>
<dbReference type="GO" id="GO:0051539">
    <property type="term" value="F:4 iron, 4 sulfur cluster binding"/>
    <property type="evidence" value="ECO:0007669"/>
    <property type="project" value="UniProtKB-KW"/>
</dbReference>
<dbReference type="GO" id="GO:0009055">
    <property type="term" value="F:electron transfer activity"/>
    <property type="evidence" value="ECO:0007669"/>
    <property type="project" value="UniProtKB-UniRule"/>
</dbReference>
<dbReference type="GO" id="GO:0046872">
    <property type="term" value="F:metal ion binding"/>
    <property type="evidence" value="ECO:0007669"/>
    <property type="project" value="UniProtKB-KW"/>
</dbReference>
<dbReference type="GO" id="GO:0016491">
    <property type="term" value="F:oxidoreductase activity"/>
    <property type="evidence" value="ECO:0007669"/>
    <property type="project" value="UniProtKB-KW"/>
</dbReference>
<dbReference type="GO" id="GO:0009773">
    <property type="term" value="P:photosynthetic electron transport in photosystem I"/>
    <property type="evidence" value="ECO:0007669"/>
    <property type="project" value="InterPro"/>
</dbReference>
<dbReference type="FunFam" id="3.30.70.20:FF:000001">
    <property type="entry name" value="Photosystem I iron-sulfur center"/>
    <property type="match status" value="1"/>
</dbReference>
<dbReference type="Gene3D" id="3.30.70.20">
    <property type="match status" value="1"/>
</dbReference>
<dbReference type="HAMAP" id="MF_01303">
    <property type="entry name" value="PSI_PsaC"/>
    <property type="match status" value="1"/>
</dbReference>
<dbReference type="InterPro" id="IPR017896">
    <property type="entry name" value="4Fe4S_Fe-S-bd"/>
</dbReference>
<dbReference type="InterPro" id="IPR017900">
    <property type="entry name" value="4Fe4S_Fe_S_CS"/>
</dbReference>
<dbReference type="InterPro" id="IPR050157">
    <property type="entry name" value="PSI_iron-sulfur_center"/>
</dbReference>
<dbReference type="InterPro" id="IPR017491">
    <property type="entry name" value="PSI_PsaC"/>
</dbReference>
<dbReference type="NCBIfam" id="TIGR03048">
    <property type="entry name" value="PS_I_psaC"/>
    <property type="match status" value="1"/>
</dbReference>
<dbReference type="PANTHER" id="PTHR24960:SF79">
    <property type="entry name" value="PHOTOSYSTEM I IRON-SULFUR CENTER"/>
    <property type="match status" value="1"/>
</dbReference>
<dbReference type="PANTHER" id="PTHR24960">
    <property type="entry name" value="PHOTOSYSTEM I IRON-SULFUR CENTER-RELATED"/>
    <property type="match status" value="1"/>
</dbReference>
<dbReference type="Pfam" id="PF14697">
    <property type="entry name" value="Fer4_21"/>
    <property type="match status" value="1"/>
</dbReference>
<dbReference type="SUPFAM" id="SSF54862">
    <property type="entry name" value="4Fe-4S ferredoxins"/>
    <property type="match status" value="1"/>
</dbReference>
<dbReference type="PROSITE" id="PS00198">
    <property type="entry name" value="4FE4S_FER_1"/>
    <property type="match status" value="2"/>
</dbReference>
<dbReference type="PROSITE" id="PS51379">
    <property type="entry name" value="4FE4S_FER_2"/>
    <property type="match status" value="2"/>
</dbReference>
<comment type="function">
    <text evidence="2">Apoprotein for the two 4Fe-4S centers FA and FB of photosystem I (PSI); essential for photochemical activity. FB is the terminal electron acceptor of PSI, donating electrons to ferredoxin. The C-terminus interacts with PsaA/B/D and helps assemble the protein into the PSI complex. Required for binding of PsaD and PsaE to PSI. PSI is a plastocyanin-ferredoxin oxidoreductase, converting photonic excitation into a charge separation, which transfers an electron from the donor P700 chlorophyll pair to the spectroscopically characterized acceptors A0, A1, FX, FA and FB in turn.</text>
</comment>
<comment type="catalytic activity">
    <reaction evidence="2">
        <text>reduced [plastocyanin] + hnu + oxidized [2Fe-2S]-[ferredoxin] = oxidized [plastocyanin] + reduced [2Fe-2S]-[ferredoxin]</text>
        <dbReference type="Rhea" id="RHEA:30407"/>
        <dbReference type="Rhea" id="RHEA-COMP:10000"/>
        <dbReference type="Rhea" id="RHEA-COMP:10001"/>
        <dbReference type="Rhea" id="RHEA-COMP:10039"/>
        <dbReference type="Rhea" id="RHEA-COMP:10040"/>
        <dbReference type="ChEBI" id="CHEBI:29036"/>
        <dbReference type="ChEBI" id="CHEBI:30212"/>
        <dbReference type="ChEBI" id="CHEBI:33737"/>
        <dbReference type="ChEBI" id="CHEBI:33738"/>
        <dbReference type="ChEBI" id="CHEBI:49552"/>
        <dbReference type="EC" id="1.97.1.12"/>
    </reaction>
</comment>
<comment type="cofactor">
    <cofactor evidence="2">
        <name>[4Fe-4S] cluster</name>
        <dbReference type="ChEBI" id="CHEBI:49883"/>
    </cofactor>
    <text evidence="2">Binds 2 [4Fe-4S] clusters. Cluster 2 is most probably the spectroscopically characterized electron acceptor FA and cluster 1 is most probably FB.</text>
</comment>
<comment type="subunit">
    <text evidence="2">The eukaryotic PSI reaction center is composed of at least 11 subunits.</text>
</comment>
<comment type="subcellular location">
    <subcellularLocation>
        <location evidence="2">Plastid</location>
        <location evidence="2">Chloroplast thylakoid membrane</location>
        <topology evidence="2">Peripheral membrane protein</topology>
        <orientation evidence="2">Stromal side</orientation>
    </subcellularLocation>
</comment>